<dbReference type="EC" id="4.2.3.5" evidence="1"/>
<dbReference type="EMBL" id="CP000488">
    <property type="protein sequence ID" value="ABL02190.1"/>
    <property type="molecule type" value="Genomic_DNA"/>
</dbReference>
<dbReference type="RefSeq" id="WP_011737815.1">
    <property type="nucleotide sequence ID" value="NC_008610.1"/>
</dbReference>
<dbReference type="SMR" id="A1AW83"/>
<dbReference type="STRING" id="413404.Rmag_0430"/>
<dbReference type="KEGG" id="rma:Rmag_0430"/>
<dbReference type="eggNOG" id="COG0082">
    <property type="taxonomic scope" value="Bacteria"/>
</dbReference>
<dbReference type="HOGENOM" id="CLU_034547_0_2_6"/>
<dbReference type="OrthoDB" id="9771806at2"/>
<dbReference type="UniPathway" id="UPA00053">
    <property type="reaction ID" value="UER00090"/>
</dbReference>
<dbReference type="Proteomes" id="UP000002587">
    <property type="component" value="Chromosome"/>
</dbReference>
<dbReference type="GO" id="GO:0005829">
    <property type="term" value="C:cytosol"/>
    <property type="evidence" value="ECO:0007669"/>
    <property type="project" value="TreeGrafter"/>
</dbReference>
<dbReference type="GO" id="GO:0004107">
    <property type="term" value="F:chorismate synthase activity"/>
    <property type="evidence" value="ECO:0007669"/>
    <property type="project" value="UniProtKB-UniRule"/>
</dbReference>
<dbReference type="GO" id="GO:0010181">
    <property type="term" value="F:FMN binding"/>
    <property type="evidence" value="ECO:0007669"/>
    <property type="project" value="TreeGrafter"/>
</dbReference>
<dbReference type="GO" id="GO:0008652">
    <property type="term" value="P:amino acid biosynthetic process"/>
    <property type="evidence" value="ECO:0007669"/>
    <property type="project" value="UniProtKB-KW"/>
</dbReference>
<dbReference type="GO" id="GO:0009073">
    <property type="term" value="P:aromatic amino acid family biosynthetic process"/>
    <property type="evidence" value="ECO:0007669"/>
    <property type="project" value="UniProtKB-KW"/>
</dbReference>
<dbReference type="GO" id="GO:0009423">
    <property type="term" value="P:chorismate biosynthetic process"/>
    <property type="evidence" value="ECO:0007669"/>
    <property type="project" value="UniProtKB-UniRule"/>
</dbReference>
<dbReference type="CDD" id="cd07304">
    <property type="entry name" value="Chorismate_synthase"/>
    <property type="match status" value="1"/>
</dbReference>
<dbReference type="FunFam" id="3.60.150.10:FF:000001">
    <property type="entry name" value="Chorismate synthase"/>
    <property type="match status" value="1"/>
</dbReference>
<dbReference type="Gene3D" id="3.60.150.10">
    <property type="entry name" value="Chorismate synthase AroC"/>
    <property type="match status" value="1"/>
</dbReference>
<dbReference type="HAMAP" id="MF_00300">
    <property type="entry name" value="Chorismate_synth"/>
    <property type="match status" value="1"/>
</dbReference>
<dbReference type="InterPro" id="IPR000453">
    <property type="entry name" value="Chorismate_synth"/>
</dbReference>
<dbReference type="InterPro" id="IPR035904">
    <property type="entry name" value="Chorismate_synth_AroC_sf"/>
</dbReference>
<dbReference type="InterPro" id="IPR020541">
    <property type="entry name" value="Chorismate_synthase_CS"/>
</dbReference>
<dbReference type="NCBIfam" id="TIGR00033">
    <property type="entry name" value="aroC"/>
    <property type="match status" value="1"/>
</dbReference>
<dbReference type="NCBIfam" id="NF003793">
    <property type="entry name" value="PRK05382.1"/>
    <property type="match status" value="1"/>
</dbReference>
<dbReference type="PANTHER" id="PTHR21085">
    <property type="entry name" value="CHORISMATE SYNTHASE"/>
    <property type="match status" value="1"/>
</dbReference>
<dbReference type="PANTHER" id="PTHR21085:SF0">
    <property type="entry name" value="CHORISMATE SYNTHASE"/>
    <property type="match status" value="1"/>
</dbReference>
<dbReference type="Pfam" id="PF01264">
    <property type="entry name" value="Chorismate_synt"/>
    <property type="match status" value="1"/>
</dbReference>
<dbReference type="PIRSF" id="PIRSF001456">
    <property type="entry name" value="Chorismate_synth"/>
    <property type="match status" value="1"/>
</dbReference>
<dbReference type="SUPFAM" id="SSF103263">
    <property type="entry name" value="Chorismate synthase, AroC"/>
    <property type="match status" value="1"/>
</dbReference>
<dbReference type="PROSITE" id="PS00787">
    <property type="entry name" value="CHORISMATE_SYNTHASE_1"/>
    <property type="match status" value="1"/>
</dbReference>
<dbReference type="PROSITE" id="PS00789">
    <property type="entry name" value="CHORISMATE_SYNTHASE_3"/>
    <property type="match status" value="1"/>
</dbReference>
<organism>
    <name type="scientific">Ruthia magnifica subsp. Calyptogena magnifica</name>
    <dbReference type="NCBI Taxonomy" id="413404"/>
    <lineage>
        <taxon>Bacteria</taxon>
        <taxon>Pseudomonadati</taxon>
        <taxon>Pseudomonadota</taxon>
        <taxon>Gammaproteobacteria</taxon>
        <taxon>Candidatus Pseudothioglobaceae</taxon>
        <taxon>Candidatus Ruthturnera</taxon>
    </lineage>
</organism>
<protein>
    <recommendedName>
        <fullName evidence="1">Chorismate synthase</fullName>
        <shortName evidence="1">CS</shortName>
        <ecNumber evidence="1">4.2.3.5</ecNumber>
    </recommendedName>
    <alternativeName>
        <fullName evidence="1">5-enolpyruvylshikimate-3-phosphate phospholyase</fullName>
    </alternativeName>
</protein>
<proteinExistence type="inferred from homology"/>
<name>AROC_RUTMC</name>
<keyword id="KW-0028">Amino-acid biosynthesis</keyword>
<keyword id="KW-0057">Aromatic amino acid biosynthesis</keyword>
<keyword id="KW-0274">FAD</keyword>
<keyword id="KW-0285">Flavoprotein</keyword>
<keyword id="KW-0288">FMN</keyword>
<keyword id="KW-0456">Lyase</keyword>
<keyword id="KW-0521">NADP</keyword>
<feature type="chain" id="PRO_1000022543" description="Chorismate synthase">
    <location>
        <begin position="1"/>
        <end position="365"/>
    </location>
</feature>
<feature type="binding site" evidence="1">
    <location>
        <position position="48"/>
    </location>
    <ligand>
        <name>NADP(+)</name>
        <dbReference type="ChEBI" id="CHEBI:58349"/>
    </ligand>
</feature>
<feature type="binding site" evidence="1">
    <location>
        <begin position="125"/>
        <end position="127"/>
    </location>
    <ligand>
        <name>FMN</name>
        <dbReference type="ChEBI" id="CHEBI:58210"/>
    </ligand>
</feature>
<feature type="binding site" evidence="1">
    <location>
        <begin position="238"/>
        <end position="239"/>
    </location>
    <ligand>
        <name>FMN</name>
        <dbReference type="ChEBI" id="CHEBI:58210"/>
    </ligand>
</feature>
<feature type="binding site" evidence="1">
    <location>
        <position position="278"/>
    </location>
    <ligand>
        <name>FMN</name>
        <dbReference type="ChEBI" id="CHEBI:58210"/>
    </ligand>
</feature>
<feature type="binding site" evidence="1">
    <location>
        <begin position="293"/>
        <end position="297"/>
    </location>
    <ligand>
        <name>FMN</name>
        <dbReference type="ChEBI" id="CHEBI:58210"/>
    </ligand>
</feature>
<feature type="binding site" evidence="1">
    <location>
        <position position="319"/>
    </location>
    <ligand>
        <name>FMN</name>
        <dbReference type="ChEBI" id="CHEBI:58210"/>
    </ligand>
</feature>
<comment type="function">
    <text evidence="1">Catalyzes the anti-1,4-elimination of the C-3 phosphate and the C-6 proR hydrogen from 5-enolpyruvylshikimate-3-phosphate (EPSP) to yield chorismate, which is the branch point compound that serves as the starting substrate for the three terminal pathways of aromatic amino acid biosynthesis. This reaction introduces a second double bond into the aromatic ring system.</text>
</comment>
<comment type="catalytic activity">
    <reaction evidence="1">
        <text>5-O-(1-carboxyvinyl)-3-phosphoshikimate = chorismate + phosphate</text>
        <dbReference type="Rhea" id="RHEA:21020"/>
        <dbReference type="ChEBI" id="CHEBI:29748"/>
        <dbReference type="ChEBI" id="CHEBI:43474"/>
        <dbReference type="ChEBI" id="CHEBI:57701"/>
        <dbReference type="EC" id="4.2.3.5"/>
    </reaction>
</comment>
<comment type="cofactor">
    <cofactor evidence="1">
        <name>FMNH2</name>
        <dbReference type="ChEBI" id="CHEBI:57618"/>
    </cofactor>
    <text evidence="1">Reduced FMN (FMNH(2)).</text>
</comment>
<comment type="pathway">
    <text evidence="1">Metabolic intermediate biosynthesis; chorismate biosynthesis; chorismate from D-erythrose 4-phosphate and phosphoenolpyruvate: step 7/7.</text>
</comment>
<comment type="subunit">
    <text evidence="1">Homotetramer.</text>
</comment>
<comment type="similarity">
    <text evidence="1">Belongs to the chorismate synthase family.</text>
</comment>
<accession>A1AW83</accession>
<sequence>MSGNTIGKLFTITTAGESHGEALIGIVDGCPPRLALTEADLQGDLDLRKPGTSCHTSQRHEEDLVKILSGTFEGKTTGTTIALIIQNTDQRSKDYGNIKDTFRPGHADYTYDQKYGFRDYRGGGRSSARETAMRVACGGIAKKYLKQVYGIEIKGYLSQLGPIKAENFDWFEVHNNPFFCPDASKVRTLEEYMDALRKSGDSVGARINITANNMPVGLGEPIFDRLEADIAHGMMSINAVKGVEIGAGFKAITQKGTEHRDAITLSGFKSNHAGGVLGGISSGQDILVSIALKPTSSLRLPIESIDKNGEPIEVVTKGRHDPCVGIRATPIAEAMLAITIMDHVMRHRAQNSNVASITPIIPASI</sequence>
<evidence type="ECO:0000255" key="1">
    <source>
        <dbReference type="HAMAP-Rule" id="MF_00300"/>
    </source>
</evidence>
<reference key="1">
    <citation type="journal article" date="2007" name="Science">
        <title>The Calyptogena magnifica chemoautotrophic symbiont genome.</title>
        <authorList>
            <person name="Newton I.L.G."/>
            <person name="Woyke T."/>
            <person name="Auchtung T.A."/>
            <person name="Dilly G.F."/>
            <person name="Dutton R.J."/>
            <person name="Fisher M.C."/>
            <person name="Fontanez K.M."/>
            <person name="Lau E."/>
            <person name="Stewart F.J."/>
            <person name="Richardson P.M."/>
            <person name="Barry K.W."/>
            <person name="Saunders E."/>
            <person name="Detter J.C."/>
            <person name="Wu D."/>
            <person name="Eisen J.A."/>
            <person name="Cavanaugh C.M."/>
        </authorList>
    </citation>
    <scope>NUCLEOTIDE SEQUENCE [LARGE SCALE GENOMIC DNA]</scope>
</reference>
<gene>
    <name evidence="1" type="primary">aroC</name>
    <name type="ordered locus">Rmag_0430</name>
</gene>